<dbReference type="EC" id="2.1.3.3" evidence="2"/>
<dbReference type="EMBL" id="AP009178">
    <property type="protein sequence ID" value="BAF69475.1"/>
    <property type="molecule type" value="Genomic_DNA"/>
</dbReference>
<dbReference type="RefSeq" id="WP_012081738.1">
    <property type="nucleotide sequence ID" value="NC_009662.1"/>
</dbReference>
<dbReference type="SMR" id="A6Q1W6"/>
<dbReference type="FunCoup" id="A6Q1W6">
    <property type="interactions" value="384"/>
</dbReference>
<dbReference type="STRING" id="387092.NIS_0361"/>
<dbReference type="KEGG" id="nis:NIS_0361"/>
<dbReference type="eggNOG" id="COG0078">
    <property type="taxonomic scope" value="Bacteria"/>
</dbReference>
<dbReference type="HOGENOM" id="CLU_043846_3_2_7"/>
<dbReference type="InParanoid" id="A6Q1W6"/>
<dbReference type="OrthoDB" id="9802587at2"/>
<dbReference type="UniPathway" id="UPA00068">
    <property type="reaction ID" value="UER00112"/>
</dbReference>
<dbReference type="Proteomes" id="UP000001118">
    <property type="component" value="Chromosome"/>
</dbReference>
<dbReference type="GO" id="GO:0005737">
    <property type="term" value="C:cytoplasm"/>
    <property type="evidence" value="ECO:0007669"/>
    <property type="project" value="UniProtKB-SubCell"/>
</dbReference>
<dbReference type="GO" id="GO:0016597">
    <property type="term" value="F:amino acid binding"/>
    <property type="evidence" value="ECO:0007669"/>
    <property type="project" value="InterPro"/>
</dbReference>
<dbReference type="GO" id="GO:0004585">
    <property type="term" value="F:ornithine carbamoyltransferase activity"/>
    <property type="evidence" value="ECO:0007669"/>
    <property type="project" value="UniProtKB-UniRule"/>
</dbReference>
<dbReference type="GO" id="GO:0042450">
    <property type="term" value="P:arginine biosynthetic process via ornithine"/>
    <property type="evidence" value="ECO:0007669"/>
    <property type="project" value="TreeGrafter"/>
</dbReference>
<dbReference type="GO" id="GO:0019240">
    <property type="term" value="P:citrulline biosynthetic process"/>
    <property type="evidence" value="ECO:0007669"/>
    <property type="project" value="TreeGrafter"/>
</dbReference>
<dbReference type="GO" id="GO:0006526">
    <property type="term" value="P:L-arginine biosynthetic process"/>
    <property type="evidence" value="ECO:0007669"/>
    <property type="project" value="UniProtKB-UniRule"/>
</dbReference>
<dbReference type="FunFam" id="3.40.50.1370:FF:000008">
    <property type="entry name" value="Ornithine carbamoyltransferase"/>
    <property type="match status" value="1"/>
</dbReference>
<dbReference type="Gene3D" id="3.40.50.1370">
    <property type="entry name" value="Aspartate/ornithine carbamoyltransferase"/>
    <property type="match status" value="2"/>
</dbReference>
<dbReference type="HAMAP" id="MF_01109">
    <property type="entry name" value="OTCase"/>
    <property type="match status" value="1"/>
</dbReference>
<dbReference type="InterPro" id="IPR006132">
    <property type="entry name" value="Asp/Orn_carbamoyltranf_P-bd"/>
</dbReference>
<dbReference type="InterPro" id="IPR006130">
    <property type="entry name" value="Asp/Orn_carbamoylTrfase"/>
</dbReference>
<dbReference type="InterPro" id="IPR036901">
    <property type="entry name" value="Asp/Orn_carbamoylTrfase_sf"/>
</dbReference>
<dbReference type="InterPro" id="IPR006131">
    <property type="entry name" value="Asp_carbamoyltransf_Asp/Orn-bd"/>
</dbReference>
<dbReference type="InterPro" id="IPR002292">
    <property type="entry name" value="Orn/put_carbamltrans"/>
</dbReference>
<dbReference type="InterPro" id="IPR024904">
    <property type="entry name" value="OTCase_ArgI"/>
</dbReference>
<dbReference type="NCBIfam" id="TIGR00658">
    <property type="entry name" value="orni_carb_tr"/>
    <property type="match status" value="1"/>
</dbReference>
<dbReference type="NCBIfam" id="NF001986">
    <property type="entry name" value="PRK00779.1"/>
    <property type="match status" value="1"/>
</dbReference>
<dbReference type="PANTHER" id="PTHR45753">
    <property type="entry name" value="ORNITHINE CARBAMOYLTRANSFERASE, MITOCHONDRIAL"/>
    <property type="match status" value="1"/>
</dbReference>
<dbReference type="PANTHER" id="PTHR45753:SF3">
    <property type="entry name" value="ORNITHINE TRANSCARBAMYLASE, MITOCHONDRIAL"/>
    <property type="match status" value="1"/>
</dbReference>
<dbReference type="Pfam" id="PF00185">
    <property type="entry name" value="OTCace"/>
    <property type="match status" value="1"/>
</dbReference>
<dbReference type="Pfam" id="PF02729">
    <property type="entry name" value="OTCace_N"/>
    <property type="match status" value="1"/>
</dbReference>
<dbReference type="PRINTS" id="PR00100">
    <property type="entry name" value="AOTCASE"/>
</dbReference>
<dbReference type="PRINTS" id="PR00102">
    <property type="entry name" value="OTCASE"/>
</dbReference>
<dbReference type="SUPFAM" id="SSF53671">
    <property type="entry name" value="Aspartate/ornithine carbamoyltransferase"/>
    <property type="match status" value="1"/>
</dbReference>
<dbReference type="PROSITE" id="PS00097">
    <property type="entry name" value="CARBAMOYLTRANSFERASE"/>
    <property type="match status" value="1"/>
</dbReference>
<comment type="function">
    <text evidence="1">Reversibly catalyzes the transfer of the carbamoyl group from carbamoyl phosphate (CP) to the N(epsilon) atom of ornithine (ORN) to produce L-citrulline.</text>
</comment>
<comment type="catalytic activity">
    <reaction evidence="2">
        <text>carbamoyl phosphate + L-ornithine = L-citrulline + phosphate + H(+)</text>
        <dbReference type="Rhea" id="RHEA:19513"/>
        <dbReference type="ChEBI" id="CHEBI:15378"/>
        <dbReference type="ChEBI" id="CHEBI:43474"/>
        <dbReference type="ChEBI" id="CHEBI:46911"/>
        <dbReference type="ChEBI" id="CHEBI:57743"/>
        <dbReference type="ChEBI" id="CHEBI:58228"/>
        <dbReference type="EC" id="2.1.3.3"/>
    </reaction>
</comment>
<comment type="pathway">
    <text evidence="2">Amino-acid biosynthesis; L-arginine biosynthesis; L-arginine from L-ornithine and carbamoyl phosphate: step 1/3.</text>
</comment>
<comment type="subcellular location">
    <subcellularLocation>
        <location evidence="2">Cytoplasm</location>
    </subcellularLocation>
</comment>
<comment type="similarity">
    <text evidence="2">Belongs to the aspartate/ornithine carbamoyltransferase superfamily. OTCase family.</text>
</comment>
<proteinExistence type="inferred from homology"/>
<protein>
    <recommendedName>
        <fullName evidence="2">Ornithine carbamoyltransferase</fullName>
        <shortName evidence="2">OTCase</shortName>
        <ecNumber evidence="2">2.1.3.3</ecNumber>
    </recommendedName>
</protein>
<evidence type="ECO:0000250" key="1"/>
<evidence type="ECO:0000255" key="2">
    <source>
        <dbReference type="HAMAP-Rule" id="MF_01109"/>
    </source>
</evidence>
<accession>A6Q1W6</accession>
<sequence>MRHFLTLKDFTKEEILEMIELARSIKAQTKRREFVPYMENKTLAMIFEKSSTRTRVSFEVGIYQLGGIGLFLSKNDIQLGRGEPMKDTARVVSRICDMVMIRTYEQSKLEEFAAFSQVPVINGLTNEYHPVQLMADYLTMIEYGKADSPVVAYVGDGNNMTHSWLMLASKLGFTLRIATPKGYEPDPNIVEDAMRFAKESGATIELMHDPKAAVQDADVVTTDTWISMGQEEEKEKRIKDFKGFQVDTILMSLAKKDAIFLHCLPAYRGYEVSEEVFEAHAEEIFDEAENRLHAQKGIMVWLDRKRGES</sequence>
<name>OTC_NITSB</name>
<gene>
    <name evidence="2" type="primary">argF</name>
    <name type="ordered locus">NIS_0361</name>
</gene>
<organism>
    <name type="scientific">Nitratiruptor sp. (strain SB155-2)</name>
    <dbReference type="NCBI Taxonomy" id="387092"/>
    <lineage>
        <taxon>Bacteria</taxon>
        <taxon>Pseudomonadati</taxon>
        <taxon>Campylobacterota</taxon>
        <taxon>Epsilonproteobacteria</taxon>
        <taxon>Nautiliales</taxon>
        <taxon>Nitratiruptoraceae</taxon>
        <taxon>Nitratiruptor</taxon>
    </lineage>
</organism>
<keyword id="KW-0028">Amino-acid biosynthesis</keyword>
<keyword id="KW-0055">Arginine biosynthesis</keyword>
<keyword id="KW-0963">Cytoplasm</keyword>
<keyword id="KW-1185">Reference proteome</keyword>
<keyword id="KW-0808">Transferase</keyword>
<reference key="1">
    <citation type="journal article" date="2007" name="Proc. Natl. Acad. Sci. U.S.A.">
        <title>Deep-sea vent epsilon-proteobacterial genomes provide insights into emergence of pathogens.</title>
        <authorList>
            <person name="Nakagawa S."/>
            <person name="Takaki Y."/>
            <person name="Shimamura S."/>
            <person name="Reysenbach A.-L."/>
            <person name="Takai K."/>
            <person name="Horikoshi K."/>
        </authorList>
    </citation>
    <scope>NUCLEOTIDE SEQUENCE [LARGE SCALE GENOMIC DNA]</scope>
    <source>
        <strain>SB155-2</strain>
    </source>
</reference>
<feature type="chain" id="PRO_1000084855" description="Ornithine carbamoyltransferase">
    <location>
        <begin position="1"/>
        <end position="309"/>
    </location>
</feature>
<feature type="binding site" evidence="2">
    <location>
        <begin position="51"/>
        <end position="54"/>
    </location>
    <ligand>
        <name>carbamoyl phosphate</name>
        <dbReference type="ChEBI" id="CHEBI:58228"/>
    </ligand>
</feature>
<feature type="binding site" evidence="2">
    <location>
        <position position="78"/>
    </location>
    <ligand>
        <name>carbamoyl phosphate</name>
        <dbReference type="ChEBI" id="CHEBI:58228"/>
    </ligand>
</feature>
<feature type="binding site" evidence="2">
    <location>
        <position position="102"/>
    </location>
    <ligand>
        <name>carbamoyl phosphate</name>
        <dbReference type="ChEBI" id="CHEBI:58228"/>
    </ligand>
</feature>
<feature type="binding site" evidence="2">
    <location>
        <begin position="129"/>
        <end position="132"/>
    </location>
    <ligand>
        <name>carbamoyl phosphate</name>
        <dbReference type="ChEBI" id="CHEBI:58228"/>
    </ligand>
</feature>
<feature type="binding site" evidence="2">
    <location>
        <position position="159"/>
    </location>
    <ligand>
        <name>L-ornithine</name>
        <dbReference type="ChEBI" id="CHEBI:46911"/>
    </ligand>
</feature>
<feature type="binding site" evidence="2">
    <location>
        <position position="223"/>
    </location>
    <ligand>
        <name>L-ornithine</name>
        <dbReference type="ChEBI" id="CHEBI:46911"/>
    </ligand>
</feature>
<feature type="binding site" evidence="2">
    <location>
        <begin position="227"/>
        <end position="228"/>
    </location>
    <ligand>
        <name>L-ornithine</name>
        <dbReference type="ChEBI" id="CHEBI:46911"/>
    </ligand>
</feature>
<feature type="binding site" evidence="2">
    <location>
        <begin position="263"/>
        <end position="264"/>
    </location>
    <ligand>
        <name>carbamoyl phosphate</name>
        <dbReference type="ChEBI" id="CHEBI:58228"/>
    </ligand>
</feature>
<feature type="binding site" evidence="2">
    <location>
        <position position="291"/>
    </location>
    <ligand>
        <name>carbamoyl phosphate</name>
        <dbReference type="ChEBI" id="CHEBI:58228"/>
    </ligand>
</feature>